<comment type="function">
    <text evidence="1">Modulates the synthesis of GlmS, by affecting the processing and stability of the regulatory small RNA GlmZ. When glucosamine-6-phosphate (GlcN6P) concentrations are high in the cell, RapZ binds GlmZ and targets it to cleavage by RNase E. Consequently, GlmZ is inactivated and unable to activate GlmS synthesis. Under low GlcN6P concentrations, RapZ is sequestered and inactivated by an other regulatory small RNA, GlmY, preventing GlmZ degradation and leading to synthesis of GlmS.</text>
</comment>
<comment type="subunit">
    <text evidence="1">Homotrimer.</text>
</comment>
<comment type="similarity">
    <text evidence="1">Belongs to the RapZ-like family. RapZ subfamily.</text>
</comment>
<sequence>MVLMIVSGRSGSGKSVALRALEDMGFYCVDNLPVVLLPDLARTLADRQISAAVSIDVRNMPESPEIFEQAMNNLPGAFSPQLLFLDADRNTLIRRYSDTRRLHPLSSKNLSLESAIDKESDLLEPLRSRADLIVDTSEMSVHELAEMLRTRLLGKRERELTMVFESFGFKHGIPIDADYVFDVRFLPNPHWDPKLRPMTGLDKPVAAFLDRHTEVHNFIYQTRSYLELWLPMLETNNRSYLTVAIGCTGGKHRSVYIAEQLADYFRSRGKNVQSRHRTLEKRKT</sequence>
<dbReference type="EMBL" id="AE017220">
    <property type="protein sequence ID" value="AAX67167.1"/>
    <property type="molecule type" value="Genomic_DNA"/>
</dbReference>
<dbReference type="RefSeq" id="WP_000243749.1">
    <property type="nucleotide sequence ID" value="NC_006905.1"/>
</dbReference>
<dbReference type="SMR" id="Q57JE5"/>
<dbReference type="KEGG" id="sec:SCH_3261"/>
<dbReference type="HOGENOM" id="CLU_059558_1_1_6"/>
<dbReference type="Proteomes" id="UP000000538">
    <property type="component" value="Chromosome"/>
</dbReference>
<dbReference type="GO" id="GO:0005524">
    <property type="term" value="F:ATP binding"/>
    <property type="evidence" value="ECO:0007669"/>
    <property type="project" value="UniProtKB-UniRule"/>
</dbReference>
<dbReference type="GO" id="GO:0005525">
    <property type="term" value="F:GTP binding"/>
    <property type="evidence" value="ECO:0007669"/>
    <property type="project" value="UniProtKB-UniRule"/>
</dbReference>
<dbReference type="GO" id="GO:0003723">
    <property type="term" value="F:RNA binding"/>
    <property type="evidence" value="ECO:0007669"/>
    <property type="project" value="UniProtKB-KW"/>
</dbReference>
<dbReference type="Gene3D" id="3.40.50.300">
    <property type="entry name" value="P-loop containing nucleotide triphosphate hydrolases"/>
    <property type="match status" value="1"/>
</dbReference>
<dbReference type="HAMAP" id="MF_00636">
    <property type="entry name" value="RapZ_like"/>
    <property type="match status" value="1"/>
</dbReference>
<dbReference type="InterPro" id="IPR027417">
    <property type="entry name" value="P-loop_NTPase"/>
</dbReference>
<dbReference type="InterPro" id="IPR005337">
    <property type="entry name" value="RapZ-like"/>
</dbReference>
<dbReference type="InterPro" id="IPR053930">
    <property type="entry name" value="RapZ-like_N"/>
</dbReference>
<dbReference type="InterPro" id="IPR053931">
    <property type="entry name" value="RapZ_C"/>
</dbReference>
<dbReference type="NCBIfam" id="NF003828">
    <property type="entry name" value="PRK05416.1"/>
    <property type="match status" value="1"/>
</dbReference>
<dbReference type="PANTHER" id="PTHR30448">
    <property type="entry name" value="RNASE ADAPTER PROTEIN RAPZ"/>
    <property type="match status" value="1"/>
</dbReference>
<dbReference type="PANTHER" id="PTHR30448:SF0">
    <property type="entry name" value="RNASE ADAPTER PROTEIN RAPZ"/>
    <property type="match status" value="1"/>
</dbReference>
<dbReference type="Pfam" id="PF22740">
    <property type="entry name" value="PapZ_C"/>
    <property type="match status" value="1"/>
</dbReference>
<dbReference type="Pfam" id="PF03668">
    <property type="entry name" value="RapZ-like_N"/>
    <property type="match status" value="1"/>
</dbReference>
<dbReference type="PIRSF" id="PIRSF005052">
    <property type="entry name" value="P-loopkin"/>
    <property type="match status" value="1"/>
</dbReference>
<dbReference type="SUPFAM" id="SSF52540">
    <property type="entry name" value="P-loop containing nucleoside triphosphate hydrolases"/>
    <property type="match status" value="1"/>
</dbReference>
<proteinExistence type="inferred from homology"/>
<name>RAPZ_SALCH</name>
<feature type="chain" id="PRO_0000258996" description="RNase adapter protein RapZ">
    <location>
        <begin position="1"/>
        <end position="284"/>
    </location>
</feature>
<feature type="region of interest" description="RNA-binding" evidence="1">
    <location>
        <begin position="266"/>
        <end position="284"/>
    </location>
</feature>
<feature type="binding site" evidence="1">
    <location>
        <begin position="8"/>
        <end position="15"/>
    </location>
    <ligand>
        <name>ATP</name>
        <dbReference type="ChEBI" id="CHEBI:30616"/>
    </ligand>
</feature>
<feature type="binding site" evidence="1">
    <location>
        <begin position="56"/>
        <end position="59"/>
    </location>
    <ligand>
        <name>GTP</name>
        <dbReference type="ChEBI" id="CHEBI:37565"/>
    </ligand>
</feature>
<gene>
    <name evidence="1" type="primary">rapZ</name>
    <name type="ordered locus">SCH_3261</name>
</gene>
<keyword id="KW-0067">ATP-binding</keyword>
<keyword id="KW-0342">GTP-binding</keyword>
<keyword id="KW-0547">Nucleotide-binding</keyword>
<keyword id="KW-0694">RNA-binding</keyword>
<evidence type="ECO:0000255" key="1">
    <source>
        <dbReference type="HAMAP-Rule" id="MF_00636"/>
    </source>
</evidence>
<organism>
    <name type="scientific">Salmonella choleraesuis (strain SC-B67)</name>
    <dbReference type="NCBI Taxonomy" id="321314"/>
    <lineage>
        <taxon>Bacteria</taxon>
        <taxon>Pseudomonadati</taxon>
        <taxon>Pseudomonadota</taxon>
        <taxon>Gammaproteobacteria</taxon>
        <taxon>Enterobacterales</taxon>
        <taxon>Enterobacteriaceae</taxon>
        <taxon>Salmonella</taxon>
    </lineage>
</organism>
<protein>
    <recommendedName>
        <fullName evidence="1">RNase adapter protein RapZ</fullName>
    </recommendedName>
</protein>
<reference key="1">
    <citation type="journal article" date="2005" name="Nucleic Acids Res.">
        <title>The genome sequence of Salmonella enterica serovar Choleraesuis, a highly invasive and resistant zoonotic pathogen.</title>
        <authorList>
            <person name="Chiu C.-H."/>
            <person name="Tang P."/>
            <person name="Chu C."/>
            <person name="Hu S."/>
            <person name="Bao Q."/>
            <person name="Yu J."/>
            <person name="Chou Y.-Y."/>
            <person name="Wang H.-S."/>
            <person name="Lee Y.-S."/>
        </authorList>
    </citation>
    <scope>NUCLEOTIDE SEQUENCE [LARGE SCALE GENOMIC DNA]</scope>
    <source>
        <strain>SC-B67</strain>
    </source>
</reference>
<accession>Q57JE5</accession>